<name>CDVB2_SULAC</name>
<reference key="1">
    <citation type="journal article" date="2005" name="J. Bacteriol.">
        <title>The genome of Sulfolobus acidocaldarius, a model organism of the Crenarchaeota.</title>
        <authorList>
            <person name="Chen L."/>
            <person name="Bruegger K."/>
            <person name="Skovgaard M."/>
            <person name="Redder P."/>
            <person name="She Q."/>
            <person name="Torarinsson E."/>
            <person name="Greve B."/>
            <person name="Awayez M."/>
            <person name="Zibat A."/>
            <person name="Klenk H.-P."/>
            <person name="Garrett R.A."/>
        </authorList>
    </citation>
    <scope>NUCLEOTIDE SEQUENCE [LARGE SCALE GENOMIC DNA]</scope>
    <source>
        <strain>ATCC 33909 / DSM 639 / JCM 8929 / NBRC 15157 / NCIMB 11770</strain>
    </source>
</reference>
<reference key="2">
    <citation type="journal article" date="2008" name="Science">
        <title>A role for the ESCRT system in cell division in archaea.</title>
        <authorList>
            <person name="Samson R.Y."/>
            <person name="Obita T."/>
            <person name="Freund S.M."/>
            <person name="Williams R.L."/>
            <person name="Bell S.D."/>
        </authorList>
    </citation>
    <scope>INDUCTION</scope>
</reference>
<reference key="3">
    <citation type="journal article" date="2014" name="Extremophiles">
        <title>Deletion of cdvB paralogous genes of Sulfolobus acidocaldarius impairs cell division.</title>
        <authorList>
            <person name="Yang N."/>
            <person name="Driessen A.J."/>
        </authorList>
    </citation>
    <scope>FUNCTION</scope>
    <scope>DISRUPTION PHENOTYPE</scope>
    <source>
        <strain>MR31</strain>
    </source>
</reference>
<organism>
    <name type="scientific">Sulfolobus acidocaldarius (strain ATCC 33909 / DSM 639 / JCM 8929 / NBRC 15157 / NCIMB 11770)</name>
    <dbReference type="NCBI Taxonomy" id="330779"/>
    <lineage>
        <taxon>Archaea</taxon>
        <taxon>Thermoproteota</taxon>
        <taxon>Thermoprotei</taxon>
        <taxon>Sulfolobales</taxon>
        <taxon>Sulfolobaceae</taxon>
        <taxon>Sulfolobus</taxon>
    </lineage>
</organism>
<dbReference type="EMBL" id="CP000077">
    <property type="protein sequence ID" value="AAY80746.1"/>
    <property type="molecule type" value="Genomic_DNA"/>
</dbReference>
<dbReference type="RefSeq" id="WP_011278248.1">
    <property type="nucleotide sequence ID" value="NC_007181.1"/>
</dbReference>
<dbReference type="SMR" id="Q4J8Y4"/>
<dbReference type="STRING" id="330779.Saci_1416"/>
<dbReference type="TCDB" id="3.A.31.1.3">
    <property type="family name" value="the endosomal sorting complexes required for transport iii (escrt-iii) family"/>
</dbReference>
<dbReference type="GeneID" id="14551915"/>
<dbReference type="KEGG" id="sai:Saci_1416"/>
<dbReference type="PATRIC" id="fig|330779.12.peg.1364"/>
<dbReference type="eggNOG" id="arCOG00452">
    <property type="taxonomic scope" value="Archaea"/>
</dbReference>
<dbReference type="HOGENOM" id="CLU_095961_0_0_2"/>
<dbReference type="Proteomes" id="UP000001018">
    <property type="component" value="Chromosome"/>
</dbReference>
<dbReference type="GO" id="GO:0051301">
    <property type="term" value="P:cell division"/>
    <property type="evidence" value="ECO:0007669"/>
    <property type="project" value="UniProtKB-KW"/>
</dbReference>
<dbReference type="Gene3D" id="6.10.140.1230">
    <property type="match status" value="1"/>
</dbReference>
<dbReference type="InterPro" id="IPR053492">
    <property type="entry name" value="Cell_Div_Machinery_Comp"/>
</dbReference>
<dbReference type="NCBIfam" id="NF041005">
    <property type="entry name" value="cell_div_CdvB1_B2"/>
    <property type="match status" value="1"/>
</dbReference>
<proteinExistence type="evidence at transcript level"/>
<evidence type="ECO:0000269" key="1">
    <source>
    </source>
</evidence>
<evidence type="ECO:0000269" key="2">
    <source>
    </source>
</evidence>
<evidence type="ECO:0000303" key="3">
    <source>
    </source>
</evidence>
<evidence type="ECO:0000305" key="4"/>
<evidence type="ECO:0000312" key="5">
    <source>
        <dbReference type="EMBL" id="AAY80746.1"/>
    </source>
</evidence>
<gene>
    <name evidence="3" type="primary">cdvB2</name>
    <name evidence="5" type="ordered locus">Saci_1416</name>
</gene>
<accession>Q4J8Y4</accession>
<sequence>MADVNDFLRNWGGRQEPTISEKIKNLFKSQQPLRYRLVMANYRLRTTISRLDVYISKLQERDRSLFEKVVESQISKDSARAAMYANEIAEIRKITKQLLTTEIALEQVQLRLETITEIGDIFTSLVPVIGVIRELRNVMKGVMPELSIELADLEEGLQEVVLEAGEFTGARVDFATSSPEARKILDEASAVAEQRMKEKFPSLPSFATSVDQKTNANQK</sequence>
<comment type="function">
    <text evidence="2">Part of a cell division machinery.</text>
</comment>
<comment type="induction">
    <text evidence="1">Expression is highest in dividing cells.</text>
</comment>
<comment type="disruption phenotype">
    <text evidence="2">Deletion mutant forms small colonies on selective plates. Forms enlarged cells, with a highly elevated content of DNA.</text>
</comment>
<feature type="chain" id="PRO_0000438768" description="Cell division protein B2">
    <location>
        <begin position="1"/>
        <end position="219"/>
    </location>
</feature>
<protein>
    <recommendedName>
        <fullName evidence="4">Cell division protein B2</fullName>
    </recommendedName>
    <alternativeName>
        <fullName evidence="4">ESCRT-III homolog</fullName>
    </alternativeName>
</protein>
<keyword id="KW-0131">Cell cycle</keyword>
<keyword id="KW-0132">Cell division</keyword>
<keyword id="KW-1185">Reference proteome</keyword>